<proteinExistence type="evidence at protein level"/>
<feature type="chain" id="PRO_0000408228" description="Lysine--tRNA ligase">
    <location>
        <begin position="1"/>
        <end position="533"/>
    </location>
</feature>
<feature type="short sequence motif" description="'HIGH' region">
    <location>
        <begin position="28"/>
        <end position="36"/>
    </location>
</feature>
<feature type="short sequence motif" description="'KMSKS' region">
    <location>
        <begin position="278"/>
        <end position="282"/>
    </location>
</feature>
<dbReference type="EC" id="6.1.1.6"/>
<dbReference type="EMBL" id="BX950229">
    <property type="protein sequence ID" value="CAF30874.1"/>
    <property type="status" value="ALT_INIT"/>
    <property type="molecule type" value="Genomic_DNA"/>
</dbReference>
<dbReference type="RefSeq" id="WP_048064106.1">
    <property type="nucleotide sequence ID" value="NC_005791.1"/>
</dbReference>
<dbReference type="SMR" id="P0CW67"/>
<dbReference type="STRING" id="267377.MMP1318"/>
<dbReference type="EnsemblBacteria" id="CAF30874">
    <property type="protein sequence ID" value="CAF30874"/>
    <property type="gene ID" value="MMP1318"/>
</dbReference>
<dbReference type="GeneID" id="2761127"/>
<dbReference type="KEGG" id="mmp:MMP1318"/>
<dbReference type="PATRIC" id="fig|267377.15.peg.1353"/>
<dbReference type="eggNOG" id="arCOG00485">
    <property type="taxonomic scope" value="Archaea"/>
</dbReference>
<dbReference type="HOGENOM" id="CLU_025562_0_0_2"/>
<dbReference type="OrthoDB" id="6838at2157"/>
<dbReference type="Proteomes" id="UP000000590">
    <property type="component" value="Chromosome"/>
</dbReference>
<dbReference type="GO" id="GO:0005737">
    <property type="term" value="C:cytoplasm"/>
    <property type="evidence" value="ECO:0007669"/>
    <property type="project" value="UniProtKB-SubCell"/>
</dbReference>
<dbReference type="GO" id="GO:0005524">
    <property type="term" value="F:ATP binding"/>
    <property type="evidence" value="ECO:0007669"/>
    <property type="project" value="UniProtKB-UniRule"/>
</dbReference>
<dbReference type="GO" id="GO:0004824">
    <property type="term" value="F:lysine-tRNA ligase activity"/>
    <property type="evidence" value="ECO:0007669"/>
    <property type="project" value="UniProtKB-UniRule"/>
</dbReference>
<dbReference type="GO" id="GO:0000049">
    <property type="term" value="F:tRNA binding"/>
    <property type="evidence" value="ECO:0007669"/>
    <property type="project" value="InterPro"/>
</dbReference>
<dbReference type="GO" id="GO:0006430">
    <property type="term" value="P:lysyl-tRNA aminoacylation"/>
    <property type="evidence" value="ECO:0007669"/>
    <property type="project" value="UniProtKB-UniRule"/>
</dbReference>
<dbReference type="Gene3D" id="1.10.10.350">
    <property type="match status" value="1"/>
</dbReference>
<dbReference type="Gene3D" id="1.10.10.770">
    <property type="match status" value="1"/>
</dbReference>
<dbReference type="Gene3D" id="3.40.50.620">
    <property type="entry name" value="HUPs"/>
    <property type="match status" value="2"/>
</dbReference>
<dbReference type="Gene3D" id="6.10.20.10">
    <property type="entry name" value="Lysine tRNA ligase, stem contact fold domain"/>
    <property type="match status" value="1"/>
</dbReference>
<dbReference type="HAMAP" id="MF_00177">
    <property type="entry name" value="Lys_tRNA_synth_class1"/>
    <property type="match status" value="1"/>
</dbReference>
<dbReference type="InterPro" id="IPR020751">
    <property type="entry name" value="aa-tRNA-synth_I_codon-bd_sub2"/>
</dbReference>
<dbReference type="InterPro" id="IPR001412">
    <property type="entry name" value="aa-tRNA-synth_I_CS"/>
</dbReference>
<dbReference type="InterPro" id="IPR008925">
    <property type="entry name" value="aa_tRNA-synth_I_cd-bd_sf"/>
</dbReference>
<dbReference type="InterPro" id="IPR002904">
    <property type="entry name" value="Lys-tRNA-ligase"/>
</dbReference>
<dbReference type="InterPro" id="IPR042078">
    <property type="entry name" value="Lys-tRNA-ligase_SC_fold"/>
</dbReference>
<dbReference type="InterPro" id="IPR014729">
    <property type="entry name" value="Rossmann-like_a/b/a_fold"/>
</dbReference>
<dbReference type="NCBIfam" id="TIGR00467">
    <property type="entry name" value="lysS_arch"/>
    <property type="match status" value="1"/>
</dbReference>
<dbReference type="PANTHER" id="PTHR37940">
    <property type="entry name" value="LYSINE--TRNA LIGASE"/>
    <property type="match status" value="1"/>
</dbReference>
<dbReference type="PANTHER" id="PTHR37940:SF1">
    <property type="entry name" value="LYSINE--TRNA LIGASE"/>
    <property type="match status" value="1"/>
</dbReference>
<dbReference type="Pfam" id="PF01921">
    <property type="entry name" value="tRNA-synt_1f"/>
    <property type="match status" value="1"/>
</dbReference>
<dbReference type="SUPFAM" id="SSF48163">
    <property type="entry name" value="An anticodon-binding domain of class I aminoacyl-tRNA synthetases"/>
    <property type="match status" value="1"/>
</dbReference>
<dbReference type="SUPFAM" id="SSF52374">
    <property type="entry name" value="Nucleotidylyl transferase"/>
    <property type="match status" value="1"/>
</dbReference>
<dbReference type="PROSITE" id="PS00178">
    <property type="entry name" value="AA_TRNA_LIGASE_I"/>
    <property type="match status" value="1"/>
</dbReference>
<protein>
    <recommendedName>
        <fullName>Lysine--tRNA ligase</fullName>
        <ecNumber>6.1.1.6</ecNumber>
    </recommendedName>
    <alternativeName>
        <fullName>Lysyl-tRNA synthetase</fullName>
        <shortName>LysRS</shortName>
    </alternativeName>
</protein>
<name>SYK_METMP</name>
<organism>
    <name type="scientific">Methanococcus maripaludis (strain DSM 14266 / JCM 13030 / NBRC 101832 / S2 / LL)</name>
    <dbReference type="NCBI Taxonomy" id="267377"/>
    <lineage>
        <taxon>Archaea</taxon>
        <taxon>Methanobacteriati</taxon>
        <taxon>Methanobacteriota</taxon>
        <taxon>Methanomada group</taxon>
        <taxon>Methanococci</taxon>
        <taxon>Methanococcales</taxon>
        <taxon>Methanococcaceae</taxon>
        <taxon>Methanococcus</taxon>
    </lineage>
</organism>
<accession>P0CW67</accession>
<accession>O30522</accession>
<reference key="1">
    <citation type="journal article" date="2004" name="J. Bacteriol.">
        <title>Complete genome sequence of the genetically tractable hydrogenotrophic methanogen Methanococcus maripaludis.</title>
        <authorList>
            <person name="Hendrickson E.L."/>
            <person name="Kaul R."/>
            <person name="Zhou Y."/>
            <person name="Bovee D."/>
            <person name="Chapman P."/>
            <person name="Chung J."/>
            <person name="Conway de Macario E."/>
            <person name="Dodsworth J.A."/>
            <person name="Gillett W."/>
            <person name="Graham D.E."/>
            <person name="Hackett M."/>
            <person name="Haydock A.K."/>
            <person name="Kang A."/>
            <person name="Land M.L."/>
            <person name="Levy R."/>
            <person name="Lie T.J."/>
            <person name="Major T.A."/>
            <person name="Moore B.C."/>
            <person name="Porat I."/>
            <person name="Palmeiri A."/>
            <person name="Rouse G."/>
            <person name="Saenphimmachak C."/>
            <person name="Soell D."/>
            <person name="Van Dien S."/>
            <person name="Wang T."/>
            <person name="Whitman W.B."/>
            <person name="Xia Q."/>
            <person name="Zhang Y."/>
            <person name="Larimer F.W."/>
            <person name="Olson M.V."/>
            <person name="Leigh J.A."/>
        </authorList>
    </citation>
    <scope>NUCLEOTIDE SEQUENCE [LARGE SCALE GENOMIC DNA]</scope>
    <source>
        <strain>DSM 14266 / JCM 13030 / NBRC 101832 / S2 / LL</strain>
    </source>
</reference>
<reference key="2">
    <citation type="journal article" date="2000" name="Proc. Natl. Acad. Sci. U.S.A.">
        <title>Context-dependent anticodon recognition by class I lysyl-tRNA synthetases.</title>
        <authorList>
            <person name="Soell D."/>
            <person name="Becker H.D."/>
            <person name="Plateau P."/>
            <person name="Blanquet S."/>
            <person name="Ibba M."/>
        </authorList>
    </citation>
    <scope>CHARACTERIZATION</scope>
</reference>
<sequence length="533" mass="61237">MHWADATSEKIMKKRNAEEYVVSSGITPSGHIHIGNARETLTADAVYKGMLKKGAEAKLIFIADDYDPLRKLYPFLPKEFEKYIGMPLSEIPCPQGCCKSYADHFLMPFLNSLEDLGVEITTHRANECYKAGMYNDAIITALENRLKIKELLDSYRKEPLADDWYPLNVVCEKCGKMHETKVINYNSEDKTITYVCKCGFENTVKPFNGIGKLPWRVDWPARWNIFGVTAEPMGKDHAASGGSYDTGIKIARQIFNYQAPEKMVYEWIQLKVGDKAMPMSSSSGVVFAVKDWTEICHPEVLRFLILKGKPTKHIDFDLKAISNLVDDYDELERKYFELIEKQKTEELNDNENEKISLYELVTPKIPERLPLQVAYRFCSIIAQIALDKETQKIDMERVFDILGRNGYNPAEFSEYDKSRLEKRLYMSKKWASDYGENLEINDLDQAKEQYETLSEEQKAWLKAFSKEVENIEIDANTIHELMYETATKLNLAPKEAFVASYKILLGKNYGPKLGSFLASLKKEFVIGRFNLTE</sequence>
<keyword id="KW-0030">Aminoacyl-tRNA synthetase</keyword>
<keyword id="KW-0067">ATP-binding</keyword>
<keyword id="KW-0963">Cytoplasm</keyword>
<keyword id="KW-0436">Ligase</keyword>
<keyword id="KW-0547">Nucleotide-binding</keyword>
<keyword id="KW-0648">Protein biosynthesis</keyword>
<keyword id="KW-1185">Reference proteome</keyword>
<gene>
    <name type="primary">lysS</name>
    <name type="ordered locus">MMP1318</name>
</gene>
<evidence type="ECO:0000305" key="1"/>
<comment type="catalytic activity">
    <reaction>
        <text>tRNA(Lys) + L-lysine + ATP = L-lysyl-tRNA(Lys) + AMP + diphosphate</text>
        <dbReference type="Rhea" id="RHEA:20792"/>
        <dbReference type="Rhea" id="RHEA-COMP:9696"/>
        <dbReference type="Rhea" id="RHEA-COMP:9697"/>
        <dbReference type="ChEBI" id="CHEBI:30616"/>
        <dbReference type="ChEBI" id="CHEBI:32551"/>
        <dbReference type="ChEBI" id="CHEBI:33019"/>
        <dbReference type="ChEBI" id="CHEBI:78442"/>
        <dbReference type="ChEBI" id="CHEBI:78529"/>
        <dbReference type="ChEBI" id="CHEBI:456215"/>
        <dbReference type="EC" id="6.1.1.6"/>
    </reaction>
</comment>
<comment type="subcellular location">
    <subcellularLocation>
        <location>Cytoplasm</location>
    </subcellularLocation>
</comment>
<comment type="miscellaneous">
    <text>Able to charge E.coli tRNA(Lys) in vitro.</text>
</comment>
<comment type="similarity">
    <text evidence="1">Belongs to the class-I aminoacyl-tRNA synthetase family.</text>
</comment>
<comment type="sequence caution" evidence="1">
    <conflict type="erroneous initiation">
        <sequence resource="EMBL-CDS" id="CAF30874"/>
    </conflict>
    <text>Extended N-terminus.</text>
</comment>